<organism>
    <name type="scientific">Homo sapiens</name>
    <name type="common">Human</name>
    <dbReference type="NCBI Taxonomy" id="9606"/>
    <lineage>
        <taxon>Eukaryota</taxon>
        <taxon>Metazoa</taxon>
        <taxon>Chordata</taxon>
        <taxon>Craniata</taxon>
        <taxon>Vertebrata</taxon>
        <taxon>Euteleostomi</taxon>
        <taxon>Mammalia</taxon>
        <taxon>Eutheria</taxon>
        <taxon>Euarchontoglires</taxon>
        <taxon>Primates</taxon>
        <taxon>Haplorrhini</taxon>
        <taxon>Catarrhini</taxon>
        <taxon>Hominidae</taxon>
        <taxon>Homo</taxon>
    </lineage>
</organism>
<gene>
    <name evidence="4" type="primary">RRP7BP</name>
    <name type="synonym">RRP7B</name>
</gene>
<evidence type="ECO:0000255" key="1"/>
<evidence type="ECO:0000256" key="2">
    <source>
        <dbReference type="SAM" id="MobiDB-lite"/>
    </source>
</evidence>
<evidence type="ECO:0000305" key="3"/>
<evidence type="ECO:0000312" key="4">
    <source>
        <dbReference type="HGNC" id="HGNC:30454"/>
    </source>
</evidence>
<keyword id="KW-0175">Coiled coil</keyword>
<keyword id="KW-1185">Reference proteome</keyword>
<proteinExistence type="uncertain"/>
<comment type="similarity">
    <text evidence="3">Belongs to the RRP7 family.</text>
</comment>
<comment type="caution">
    <text evidence="3">Could be the product of a pseudogene.</text>
</comment>
<protein>
    <recommendedName>
        <fullName>Putative ribosomal RNA-processing protein 7 homolog B</fullName>
    </recommendedName>
    <alternativeName>
        <fullName>Putative gastric cancer antigen Zg14-like protein</fullName>
    </alternativeName>
</protein>
<accession>Q9NSQ0</accession>
<accession>B3KQ98</accession>
<name>RRP7B_HUMAN</name>
<feature type="chain" id="PRO_0000336994" description="Putative ribosomal RNA-processing protein 7 homolog B">
    <location>
        <begin position="1"/>
        <end position="103"/>
    </location>
</feature>
<feature type="region of interest" description="Disordered" evidence="2">
    <location>
        <begin position="1"/>
        <end position="25"/>
    </location>
</feature>
<feature type="coiled-coil region" evidence="1">
    <location>
        <begin position="71"/>
        <end position="100"/>
    </location>
</feature>
<feature type="compositionally biased region" description="Basic and acidic residues" evidence="2">
    <location>
        <begin position="1"/>
        <end position="19"/>
    </location>
</feature>
<feature type="sequence conflict" description="In Ref. 2; BAG51960." evidence="3" ref="2">
    <original>R</original>
    <variation>W</variation>
    <location>
        <position position="48"/>
    </location>
</feature>
<feature type="sequence conflict" description="In Ref. 2; BAG51960." evidence="3" ref="2">
    <original>Q</original>
    <variation>R</variation>
    <location>
        <position position="59"/>
    </location>
</feature>
<dbReference type="EMBL" id="AL157851">
    <property type="protein sequence ID" value="CAB75937.1"/>
    <property type="molecule type" value="mRNA"/>
</dbReference>
<dbReference type="EMBL" id="AK074492">
    <property type="protein sequence ID" value="BAG51960.1"/>
    <property type="molecule type" value="mRNA"/>
</dbReference>
<dbReference type="SMR" id="Q9NSQ0"/>
<dbReference type="iPTMnet" id="Q9NSQ0"/>
<dbReference type="PhosphoSitePlus" id="Q9NSQ0"/>
<dbReference type="BioMuta" id="HGNC:30454"/>
<dbReference type="DMDM" id="74719211"/>
<dbReference type="jPOST" id="Q9NSQ0"/>
<dbReference type="MassIVE" id="Q9NSQ0"/>
<dbReference type="PeptideAtlas" id="Q9NSQ0"/>
<dbReference type="ProteomicsDB" id="82575"/>
<dbReference type="AGR" id="HGNC:30454"/>
<dbReference type="GeneCards" id="RRP7BP"/>
<dbReference type="HGNC" id="HGNC:30454">
    <property type="gene designation" value="RRP7BP"/>
</dbReference>
<dbReference type="neXtProt" id="NX_Q9NSQ0"/>
<dbReference type="InParanoid" id="Q9NSQ0"/>
<dbReference type="PAN-GO" id="Q9NSQ0">
    <property type="GO annotations" value="4 GO annotations based on evolutionary models"/>
</dbReference>
<dbReference type="ChiTaRS" id="RRP7BP">
    <property type="organism name" value="human"/>
</dbReference>
<dbReference type="Pharos" id="Q9NSQ0">
    <property type="development level" value="Tdark"/>
</dbReference>
<dbReference type="Proteomes" id="UP000005640">
    <property type="component" value="Unplaced"/>
</dbReference>
<dbReference type="RNAct" id="Q9NSQ0">
    <property type="molecule type" value="protein"/>
</dbReference>
<dbReference type="GO" id="GO:0032545">
    <property type="term" value="C:CURI complex"/>
    <property type="evidence" value="ECO:0000318"/>
    <property type="project" value="GO_Central"/>
</dbReference>
<dbReference type="GO" id="GO:0034456">
    <property type="term" value="C:UTP-C complex"/>
    <property type="evidence" value="ECO:0000318"/>
    <property type="project" value="GO_Central"/>
</dbReference>
<dbReference type="GO" id="GO:0000028">
    <property type="term" value="P:ribosomal small subunit assembly"/>
    <property type="evidence" value="ECO:0000318"/>
    <property type="project" value="GO_Central"/>
</dbReference>
<dbReference type="GO" id="GO:0006364">
    <property type="term" value="P:rRNA processing"/>
    <property type="evidence" value="ECO:0000318"/>
    <property type="project" value="GO_Central"/>
</dbReference>
<dbReference type="Gene3D" id="6.10.250.1770">
    <property type="match status" value="1"/>
</dbReference>
<dbReference type="InterPro" id="IPR040446">
    <property type="entry name" value="RRP7"/>
</dbReference>
<dbReference type="InterPro" id="IPR024326">
    <property type="entry name" value="RRP7_C"/>
</dbReference>
<dbReference type="PANTHER" id="PTHR13191">
    <property type="entry name" value="RIBOSOMAL RNA PROCESSING PROTEIN 7-RELATED"/>
    <property type="match status" value="1"/>
</dbReference>
<dbReference type="PANTHER" id="PTHR13191:SF0">
    <property type="entry name" value="RIBOSOMAL RNA-PROCESSING PROTEIN 7 HOMOLOG A-RELATED"/>
    <property type="match status" value="1"/>
</dbReference>
<dbReference type="Pfam" id="PF12923">
    <property type="entry name" value="RRP7"/>
    <property type="match status" value="1"/>
</dbReference>
<sequence length="103" mass="12575">MEAYDQKIAEEEAKAKEEEGVPDEEGWVKVTRRGRRPVLPRTEAASLRVLERERRKRSQKELLNYAWQHRESKMEHLAQLRKKFEEDKQRIELLRAQRKFRPY</sequence>
<reference key="1">
    <citation type="journal article" date="2003" name="Genome Res.">
        <title>Reevaluating human gene annotation: a second-generation analysis of chromosome 22.</title>
        <authorList>
            <person name="Collins J.E."/>
            <person name="Goward M.E."/>
            <person name="Cole C.G."/>
            <person name="Smink L.J."/>
            <person name="Huckle E.J."/>
            <person name="Knowles S."/>
            <person name="Bye J.M."/>
            <person name="Beare D.M."/>
            <person name="Dunham I."/>
        </authorList>
    </citation>
    <scope>NUCLEOTIDE SEQUENCE [LARGE SCALE MRNA]</scope>
</reference>
<reference key="2">
    <citation type="journal article" date="2005" name="DNA Res.">
        <title>Signal sequence and keyword trap in silico for selection of full-length human cDNAs encoding secretion or membrane proteins from oligo-capped cDNA libraries.</title>
        <authorList>
            <person name="Otsuki T."/>
            <person name="Ota T."/>
            <person name="Nishikawa T."/>
            <person name="Hayashi K."/>
            <person name="Suzuki Y."/>
            <person name="Yamamoto J."/>
            <person name="Wakamatsu A."/>
            <person name="Kimura K."/>
            <person name="Sakamoto K."/>
            <person name="Hatano N."/>
            <person name="Kawai Y."/>
            <person name="Ishii S."/>
            <person name="Saito K."/>
            <person name="Kojima S."/>
            <person name="Sugiyama T."/>
            <person name="Ono T."/>
            <person name="Okano K."/>
            <person name="Yoshikawa Y."/>
            <person name="Aotsuka S."/>
            <person name="Sasaki N."/>
            <person name="Hattori A."/>
            <person name="Okumura K."/>
            <person name="Nagai K."/>
            <person name="Sugano S."/>
            <person name="Isogai T."/>
        </authorList>
    </citation>
    <scope>NUCLEOTIDE SEQUENCE [LARGE SCALE MRNA]</scope>
    <source>
        <tissue>Embryo</tissue>
    </source>
</reference>